<reference key="1">
    <citation type="journal article" date="2007" name="Genome Res.">
        <title>Genome sequence of a proteolytic (Group I) Clostridium botulinum strain Hall A and comparative analysis of the clostridial genomes.</title>
        <authorList>
            <person name="Sebaihia M."/>
            <person name="Peck M.W."/>
            <person name="Minton N.P."/>
            <person name="Thomson N.R."/>
            <person name="Holden M.T.G."/>
            <person name="Mitchell W.J."/>
            <person name="Carter A.T."/>
            <person name="Bentley S.D."/>
            <person name="Mason D.R."/>
            <person name="Crossman L."/>
            <person name="Paul C.J."/>
            <person name="Ivens A."/>
            <person name="Wells-Bennik M.H.J."/>
            <person name="Davis I.J."/>
            <person name="Cerdeno-Tarraga A.M."/>
            <person name="Churcher C."/>
            <person name="Quail M.A."/>
            <person name="Chillingworth T."/>
            <person name="Feltwell T."/>
            <person name="Fraser A."/>
            <person name="Goodhead I."/>
            <person name="Hance Z."/>
            <person name="Jagels K."/>
            <person name="Larke N."/>
            <person name="Maddison M."/>
            <person name="Moule S."/>
            <person name="Mungall K."/>
            <person name="Norbertczak H."/>
            <person name="Rabbinowitsch E."/>
            <person name="Sanders M."/>
            <person name="Simmonds M."/>
            <person name="White B."/>
            <person name="Whithead S."/>
            <person name="Parkhill J."/>
        </authorList>
    </citation>
    <scope>NUCLEOTIDE SEQUENCE [LARGE SCALE GENOMIC DNA]</scope>
    <source>
        <strain>Hall / ATCC 3502 / NCTC 13319 / Type A</strain>
    </source>
</reference>
<reference key="2">
    <citation type="journal article" date="2007" name="PLoS ONE">
        <title>Analysis of the neurotoxin complex genes in Clostridium botulinum A1-A4 and B1 strains: BoNT/A3, /Ba4 and /B1 clusters are located within plasmids.</title>
        <authorList>
            <person name="Smith T.J."/>
            <person name="Hill K.K."/>
            <person name="Foley B.T."/>
            <person name="Detter J.C."/>
            <person name="Munk A.C."/>
            <person name="Bruce D.C."/>
            <person name="Doggett N.A."/>
            <person name="Smith L.A."/>
            <person name="Marks J.D."/>
            <person name="Xie G."/>
            <person name="Brettin T.S."/>
        </authorList>
    </citation>
    <scope>NUCLEOTIDE SEQUENCE [LARGE SCALE GENOMIC DNA]</scope>
    <source>
        <strain>Hall / ATCC 3502 / NCTC 13319 / Type A</strain>
    </source>
</reference>
<organism>
    <name type="scientific">Clostridium botulinum (strain Hall / ATCC 3502 / NCTC 13319 / Type A)</name>
    <dbReference type="NCBI Taxonomy" id="441771"/>
    <lineage>
        <taxon>Bacteria</taxon>
        <taxon>Bacillati</taxon>
        <taxon>Bacillota</taxon>
        <taxon>Clostridia</taxon>
        <taxon>Eubacteriales</taxon>
        <taxon>Clostridiaceae</taxon>
        <taxon>Clostridium</taxon>
    </lineage>
</organism>
<evidence type="ECO:0000255" key="1">
    <source>
        <dbReference type="HAMAP-Rule" id="MF_01023"/>
    </source>
</evidence>
<proteinExistence type="inferred from homology"/>
<comment type="catalytic activity">
    <reaction evidence="1">
        <text>L-histidinol phosphate + 2-oxoglutarate = 3-(imidazol-4-yl)-2-oxopropyl phosphate + L-glutamate</text>
        <dbReference type="Rhea" id="RHEA:23744"/>
        <dbReference type="ChEBI" id="CHEBI:16810"/>
        <dbReference type="ChEBI" id="CHEBI:29985"/>
        <dbReference type="ChEBI" id="CHEBI:57766"/>
        <dbReference type="ChEBI" id="CHEBI:57980"/>
        <dbReference type="EC" id="2.6.1.9"/>
    </reaction>
</comment>
<comment type="cofactor">
    <cofactor evidence="1">
        <name>pyridoxal 5'-phosphate</name>
        <dbReference type="ChEBI" id="CHEBI:597326"/>
    </cofactor>
</comment>
<comment type="pathway">
    <text evidence="1">Amino-acid biosynthesis; L-histidine biosynthesis; L-histidine from 5-phospho-alpha-D-ribose 1-diphosphate: step 7/9.</text>
</comment>
<comment type="subunit">
    <text evidence="1">Homodimer.</text>
</comment>
<comment type="similarity">
    <text evidence="1">Belongs to the class-II pyridoxal-phosphate-dependent aminotransferase family. Histidinol-phosphate aminotransferase subfamily.</text>
</comment>
<dbReference type="EC" id="2.6.1.9" evidence="1"/>
<dbReference type="EMBL" id="CP000727">
    <property type="protein sequence ID" value="ABS38142.1"/>
    <property type="molecule type" value="Genomic_DNA"/>
</dbReference>
<dbReference type="EMBL" id="AM412317">
    <property type="protein sequence ID" value="CAL83110.1"/>
    <property type="molecule type" value="Genomic_DNA"/>
</dbReference>
<dbReference type="RefSeq" id="WP_011949115.1">
    <property type="nucleotide sequence ID" value="NC_009698.1"/>
</dbReference>
<dbReference type="RefSeq" id="YP_001254078.1">
    <property type="nucleotide sequence ID" value="NC_009495.1"/>
</dbReference>
<dbReference type="RefSeq" id="YP_001387462.1">
    <property type="nucleotide sequence ID" value="NC_009698.1"/>
</dbReference>
<dbReference type="SMR" id="A5I245"/>
<dbReference type="GeneID" id="5185826"/>
<dbReference type="KEGG" id="cbh:CLC_1602"/>
<dbReference type="KEGG" id="cbo:CBO1571"/>
<dbReference type="PATRIC" id="fig|413999.7.peg.1547"/>
<dbReference type="HOGENOM" id="CLU_017584_3_0_9"/>
<dbReference type="UniPathway" id="UPA00031">
    <property type="reaction ID" value="UER00012"/>
</dbReference>
<dbReference type="PRO" id="PR:A5I245"/>
<dbReference type="Proteomes" id="UP000001986">
    <property type="component" value="Chromosome"/>
</dbReference>
<dbReference type="GO" id="GO:0004400">
    <property type="term" value="F:histidinol-phosphate transaminase activity"/>
    <property type="evidence" value="ECO:0007669"/>
    <property type="project" value="UniProtKB-UniRule"/>
</dbReference>
<dbReference type="GO" id="GO:0030170">
    <property type="term" value="F:pyridoxal phosphate binding"/>
    <property type="evidence" value="ECO:0007669"/>
    <property type="project" value="InterPro"/>
</dbReference>
<dbReference type="GO" id="GO:0000105">
    <property type="term" value="P:L-histidine biosynthetic process"/>
    <property type="evidence" value="ECO:0007669"/>
    <property type="project" value="UniProtKB-UniRule"/>
</dbReference>
<dbReference type="CDD" id="cd00609">
    <property type="entry name" value="AAT_like"/>
    <property type="match status" value="1"/>
</dbReference>
<dbReference type="Gene3D" id="3.90.1150.10">
    <property type="entry name" value="Aspartate Aminotransferase, domain 1"/>
    <property type="match status" value="1"/>
</dbReference>
<dbReference type="Gene3D" id="3.40.640.10">
    <property type="entry name" value="Type I PLP-dependent aspartate aminotransferase-like (Major domain)"/>
    <property type="match status" value="1"/>
</dbReference>
<dbReference type="HAMAP" id="MF_01023">
    <property type="entry name" value="HisC_aminotrans_2"/>
    <property type="match status" value="1"/>
</dbReference>
<dbReference type="InterPro" id="IPR001917">
    <property type="entry name" value="Aminotrans_II_pyridoxalP_BS"/>
</dbReference>
<dbReference type="InterPro" id="IPR004839">
    <property type="entry name" value="Aminotransferase_I/II_large"/>
</dbReference>
<dbReference type="InterPro" id="IPR005861">
    <property type="entry name" value="HisP_aminotrans"/>
</dbReference>
<dbReference type="InterPro" id="IPR050106">
    <property type="entry name" value="HistidinolP_aminotransfase"/>
</dbReference>
<dbReference type="InterPro" id="IPR015424">
    <property type="entry name" value="PyrdxlP-dep_Trfase"/>
</dbReference>
<dbReference type="InterPro" id="IPR015421">
    <property type="entry name" value="PyrdxlP-dep_Trfase_major"/>
</dbReference>
<dbReference type="InterPro" id="IPR015422">
    <property type="entry name" value="PyrdxlP-dep_Trfase_small"/>
</dbReference>
<dbReference type="NCBIfam" id="TIGR01141">
    <property type="entry name" value="hisC"/>
    <property type="match status" value="1"/>
</dbReference>
<dbReference type="PANTHER" id="PTHR43643:SF3">
    <property type="entry name" value="HISTIDINOL-PHOSPHATE AMINOTRANSFERASE"/>
    <property type="match status" value="1"/>
</dbReference>
<dbReference type="PANTHER" id="PTHR43643">
    <property type="entry name" value="HISTIDINOL-PHOSPHATE AMINOTRANSFERASE 2"/>
    <property type="match status" value="1"/>
</dbReference>
<dbReference type="Pfam" id="PF00155">
    <property type="entry name" value="Aminotran_1_2"/>
    <property type="match status" value="1"/>
</dbReference>
<dbReference type="SUPFAM" id="SSF53383">
    <property type="entry name" value="PLP-dependent transferases"/>
    <property type="match status" value="1"/>
</dbReference>
<dbReference type="PROSITE" id="PS00599">
    <property type="entry name" value="AA_TRANSFER_CLASS_2"/>
    <property type="match status" value="1"/>
</dbReference>
<name>HIS8_CLOBH</name>
<sequence>MSKYWSNITKDIEPYVCGEQPKNKKIIKLNTNENPYPPSPKVLQAIENAAKDDLRLYPDPNCDTLRKTIANYYNLSKEEVFIGNGSDEVLSLSFLTFFNPEETVVFSDISYSFYPVYANLYKLDYELAKLREDFSIDIEDFKNTKGGAIITNPNAPTGLYLSLDSIKQILEDNINKVVMVDEAYIDFGGESSVSLIKDYPNLLVIQTLSKSRSLAGMRIGFALGKKELIEGLNRIKNSFNSYTIDRISSLAAIEAIKDEEYFKECTLKVIKTRNWTINELGKIGFKIIPSKANFIFITHDTYQAEDILIKLRDENVLVRYFNKDRISNYLRVSIGSKEEMEIFMDKIKKIINKL</sequence>
<feature type="chain" id="PRO_0000319750" description="Histidinol-phosphate aminotransferase">
    <location>
        <begin position="1"/>
        <end position="354"/>
    </location>
</feature>
<feature type="modified residue" description="N6-(pyridoxal phosphate)lysine" evidence="1">
    <location>
        <position position="210"/>
    </location>
</feature>
<gene>
    <name evidence="1" type="primary">hisC</name>
    <name type="ordered locus">CBO1571</name>
    <name type="ordered locus">CLC_1602</name>
</gene>
<keyword id="KW-0028">Amino-acid biosynthesis</keyword>
<keyword id="KW-0032">Aminotransferase</keyword>
<keyword id="KW-0368">Histidine biosynthesis</keyword>
<keyword id="KW-0663">Pyridoxal phosphate</keyword>
<keyword id="KW-1185">Reference proteome</keyword>
<keyword id="KW-0808">Transferase</keyword>
<accession>A5I245</accession>
<accession>A7G3U7</accession>
<protein>
    <recommendedName>
        <fullName evidence="1">Histidinol-phosphate aminotransferase</fullName>
        <ecNumber evidence="1">2.6.1.9</ecNumber>
    </recommendedName>
    <alternativeName>
        <fullName evidence="1">Imidazole acetol-phosphate transaminase</fullName>
    </alternativeName>
</protein>